<comment type="function">
    <text evidence="1">Usually encoded in the trnK tRNA gene intron. Probably assists in splicing its own and other chloroplast group II introns.</text>
</comment>
<comment type="subcellular location">
    <subcellularLocation>
        <location>Plastid</location>
        <location>Chloroplast</location>
    </subcellularLocation>
</comment>
<comment type="similarity">
    <text evidence="1">Belongs to the intron maturase 2 family. MatK subfamily.</text>
</comment>
<reference key="1">
    <citation type="journal article" date="2004" name="Am. J. Bot.">
        <title>Phylogeny of Amorpheae (Fabaceae: Pailionoideae).</title>
        <authorList>
            <person name="McMahon M."/>
            <person name="Hufford L."/>
        </authorList>
        <dbReference type="AGRICOLA" id="IND43644443"/>
    </citation>
    <scope>NUCLEOTIDE SEQUENCE [GENOMIC DNA]</scope>
</reference>
<name>MATK_DALWR</name>
<protein>
    <recommendedName>
        <fullName evidence="1">Maturase K</fullName>
    </recommendedName>
    <alternativeName>
        <fullName evidence="1">Intron maturase</fullName>
    </alternativeName>
</protein>
<gene>
    <name evidence="1" type="primary">matK</name>
</gene>
<keyword id="KW-0150">Chloroplast</keyword>
<keyword id="KW-0507">mRNA processing</keyword>
<keyword id="KW-0934">Plastid</keyword>
<keyword id="KW-0694">RNA-binding</keyword>
<keyword id="KW-0819">tRNA processing</keyword>
<feature type="chain" id="PRO_0000143356" description="Maturase K">
    <location>
        <begin position="1"/>
        <end position="512"/>
    </location>
</feature>
<evidence type="ECO:0000255" key="1">
    <source>
        <dbReference type="HAMAP-Rule" id="MF_01390"/>
    </source>
</evidence>
<proteinExistence type="inferred from homology"/>
<dbReference type="EMBL" id="AY391802">
    <property type="protein sequence ID" value="AAR18932.1"/>
    <property type="molecule type" value="Genomic_DNA"/>
</dbReference>
<dbReference type="GO" id="GO:0009507">
    <property type="term" value="C:chloroplast"/>
    <property type="evidence" value="ECO:0007669"/>
    <property type="project" value="UniProtKB-SubCell"/>
</dbReference>
<dbReference type="GO" id="GO:0003723">
    <property type="term" value="F:RNA binding"/>
    <property type="evidence" value="ECO:0007669"/>
    <property type="project" value="UniProtKB-KW"/>
</dbReference>
<dbReference type="GO" id="GO:0006397">
    <property type="term" value="P:mRNA processing"/>
    <property type="evidence" value="ECO:0007669"/>
    <property type="project" value="UniProtKB-KW"/>
</dbReference>
<dbReference type="GO" id="GO:0008380">
    <property type="term" value="P:RNA splicing"/>
    <property type="evidence" value="ECO:0007669"/>
    <property type="project" value="UniProtKB-UniRule"/>
</dbReference>
<dbReference type="GO" id="GO:0008033">
    <property type="term" value="P:tRNA processing"/>
    <property type="evidence" value="ECO:0007669"/>
    <property type="project" value="UniProtKB-KW"/>
</dbReference>
<dbReference type="HAMAP" id="MF_01390">
    <property type="entry name" value="MatK"/>
    <property type="match status" value="1"/>
</dbReference>
<dbReference type="InterPro" id="IPR024937">
    <property type="entry name" value="Domain_X"/>
</dbReference>
<dbReference type="InterPro" id="IPR002866">
    <property type="entry name" value="Maturase_MatK"/>
</dbReference>
<dbReference type="InterPro" id="IPR024942">
    <property type="entry name" value="Maturase_MatK_N"/>
</dbReference>
<dbReference type="PANTHER" id="PTHR34811">
    <property type="entry name" value="MATURASE K"/>
    <property type="match status" value="1"/>
</dbReference>
<dbReference type="PANTHER" id="PTHR34811:SF1">
    <property type="entry name" value="MATURASE K"/>
    <property type="match status" value="1"/>
</dbReference>
<dbReference type="Pfam" id="PF01348">
    <property type="entry name" value="Intron_maturas2"/>
    <property type="match status" value="1"/>
</dbReference>
<dbReference type="Pfam" id="PF01824">
    <property type="entry name" value="MatK_N"/>
    <property type="match status" value="1"/>
</dbReference>
<geneLocation type="chloroplast"/>
<organism>
    <name type="scientific">Dalea wrightii</name>
    <name type="common">Wright's prairie clover</name>
    <dbReference type="NCBI Taxonomy" id="248515"/>
    <lineage>
        <taxon>Eukaryota</taxon>
        <taxon>Viridiplantae</taxon>
        <taxon>Streptophyta</taxon>
        <taxon>Embryophyta</taxon>
        <taxon>Tracheophyta</taxon>
        <taxon>Spermatophyta</taxon>
        <taxon>Magnoliopsida</taxon>
        <taxon>eudicotyledons</taxon>
        <taxon>Gunneridae</taxon>
        <taxon>Pentapetalae</taxon>
        <taxon>rosids</taxon>
        <taxon>fabids</taxon>
        <taxon>Fabales</taxon>
        <taxon>Fabaceae</taxon>
        <taxon>Papilionoideae</taxon>
        <taxon>50 kb inversion clade</taxon>
        <taxon>dalbergioids sensu lato</taxon>
        <taxon>Amorpheae</taxon>
        <taxon>Dalea</taxon>
    </lineage>
</organism>
<sequence length="512" mass="61001">MEEYKVYLELDRSRQQDFLYPFIFQESIYGLVYGHDLNGSILVENVDYDNKSSLLIVKRLITRMYQQNHLIVSANDFNKNQQFWGYNKNLYSQIISEAFAIVVEIPFYSQLRSSLEGLEGAEVIKSYNKLRSIHAIFPFFEDKFTYLNYVSDVQIPYPIHLEILVQILRYWVKDPPLFHLLRSFLYQYCNWNSFINPKKSISSFSKSNPRFFFFLYNFYVCEYESIFLFLRKKSSHLRLTSFSVLFERIYFYAKIEHLVEVFPKDFLSTLSLFKDPLIHYLRYQGKSILASKNAPLLMNKWKYYLISLWQCYFNVWSQPGTIYINQLSDHSFHFFWGGYFSNVRLNLSVVRSQMLENSFLIEIVMKKLDTIVPILPIIRSLAKAKFCNVLGHPISKPVWADLSDFGIIDRFLRIRRNISHYYNGSSKKKSLYRIKYILRLSCIKTLVRKHKSTVRAFLKRLGSEELLKEFFTEEEDILSLIFPRASSTLQRLYGGRIWYLDIIFSNDLVNHS</sequence>
<accession>Q6TND0</accession>